<accession>Q5HG44</accession>
<keyword id="KW-0012">Acyltransferase</keyword>
<keyword id="KW-0046">Antibiotic resistance</keyword>
<keyword id="KW-0133">Cell shape</keyword>
<keyword id="KW-0961">Cell wall biogenesis/degradation</keyword>
<keyword id="KW-0963">Cytoplasm</keyword>
<keyword id="KW-0573">Peptidoglycan synthesis</keyword>
<keyword id="KW-0808">Transferase</keyword>
<proteinExistence type="inferred from homology"/>
<organism>
    <name type="scientific">Staphylococcus aureus (strain COL)</name>
    <dbReference type="NCBI Taxonomy" id="93062"/>
    <lineage>
        <taxon>Bacteria</taxon>
        <taxon>Bacillati</taxon>
        <taxon>Bacillota</taxon>
        <taxon>Bacilli</taxon>
        <taxon>Bacillales</taxon>
        <taxon>Staphylococcaceae</taxon>
        <taxon>Staphylococcus</taxon>
    </lineage>
</organism>
<dbReference type="EC" id="2.3.2.18"/>
<dbReference type="EMBL" id="CP000046">
    <property type="protein sequence ID" value="AAW38156.1"/>
    <property type="molecule type" value="Genomic_DNA"/>
</dbReference>
<dbReference type="RefSeq" id="WP_000673098.1">
    <property type="nucleotide sequence ID" value="NZ_JBGOFO010000003.1"/>
</dbReference>
<dbReference type="SMR" id="Q5HG44"/>
<dbReference type="KEGG" id="sac:SACOL1411"/>
<dbReference type="HOGENOM" id="CLU_048411_1_0_9"/>
<dbReference type="Proteomes" id="UP000000530">
    <property type="component" value="Chromosome"/>
</dbReference>
<dbReference type="GO" id="GO:0005737">
    <property type="term" value="C:cytoplasm"/>
    <property type="evidence" value="ECO:0007669"/>
    <property type="project" value="UniProtKB-SubCell"/>
</dbReference>
<dbReference type="GO" id="GO:0016755">
    <property type="term" value="F:aminoacyltransferase activity"/>
    <property type="evidence" value="ECO:0007669"/>
    <property type="project" value="InterPro"/>
</dbReference>
<dbReference type="GO" id="GO:0071555">
    <property type="term" value="P:cell wall organization"/>
    <property type="evidence" value="ECO:0007669"/>
    <property type="project" value="UniProtKB-KW"/>
</dbReference>
<dbReference type="GO" id="GO:0009252">
    <property type="term" value="P:peptidoglycan biosynthetic process"/>
    <property type="evidence" value="ECO:0007669"/>
    <property type="project" value="UniProtKB-KW"/>
</dbReference>
<dbReference type="GO" id="GO:0008360">
    <property type="term" value="P:regulation of cell shape"/>
    <property type="evidence" value="ECO:0007669"/>
    <property type="project" value="UniProtKB-KW"/>
</dbReference>
<dbReference type="GO" id="GO:0046677">
    <property type="term" value="P:response to antibiotic"/>
    <property type="evidence" value="ECO:0007669"/>
    <property type="project" value="UniProtKB-KW"/>
</dbReference>
<dbReference type="Gene3D" id="1.20.58.90">
    <property type="match status" value="1"/>
</dbReference>
<dbReference type="Gene3D" id="3.40.630.30">
    <property type="match status" value="2"/>
</dbReference>
<dbReference type="InterPro" id="IPR016181">
    <property type="entry name" value="Acyl_CoA_acyltransferase"/>
</dbReference>
<dbReference type="InterPro" id="IPR003447">
    <property type="entry name" value="FEMABX"/>
</dbReference>
<dbReference type="InterPro" id="IPR050644">
    <property type="entry name" value="PG_Glycine_Bridge_Synth"/>
</dbReference>
<dbReference type="PANTHER" id="PTHR36174:SF2">
    <property type="entry name" value="AMINOACYLTRANSFERASE FEMA"/>
    <property type="match status" value="1"/>
</dbReference>
<dbReference type="PANTHER" id="PTHR36174">
    <property type="entry name" value="LIPID II:GLYCINE GLYCYLTRANSFERASE"/>
    <property type="match status" value="1"/>
</dbReference>
<dbReference type="Pfam" id="PF02388">
    <property type="entry name" value="FemAB"/>
    <property type="match status" value="1"/>
</dbReference>
<dbReference type="SUPFAM" id="SSF55729">
    <property type="entry name" value="Acyl-CoA N-acyltransferases (Nat)"/>
    <property type="match status" value="2"/>
</dbReference>
<dbReference type="PROSITE" id="PS51191">
    <property type="entry name" value="FEMABX"/>
    <property type="match status" value="1"/>
</dbReference>
<gene>
    <name type="primary">femB</name>
    <name type="ordered locus">SACOL1411</name>
</gene>
<reference key="1">
    <citation type="journal article" date="2005" name="J. Bacteriol.">
        <title>Insights on evolution of virulence and resistance from the complete genome analysis of an early methicillin-resistant Staphylococcus aureus strain and a biofilm-producing methicillin-resistant Staphylococcus epidermidis strain.</title>
        <authorList>
            <person name="Gill S.R."/>
            <person name="Fouts D.E."/>
            <person name="Archer G.L."/>
            <person name="Mongodin E.F."/>
            <person name="DeBoy R.T."/>
            <person name="Ravel J."/>
            <person name="Paulsen I.T."/>
            <person name="Kolonay J.F."/>
            <person name="Brinkac L.M."/>
            <person name="Beanan M.J."/>
            <person name="Dodson R.J."/>
            <person name="Daugherty S.C."/>
            <person name="Madupu R."/>
            <person name="Angiuoli S.V."/>
            <person name="Durkin A.S."/>
            <person name="Haft D.H."/>
            <person name="Vamathevan J.J."/>
            <person name="Khouri H."/>
            <person name="Utterback T.R."/>
            <person name="Lee C."/>
            <person name="Dimitrov G."/>
            <person name="Jiang L."/>
            <person name="Qin H."/>
            <person name="Weidman J."/>
            <person name="Tran K."/>
            <person name="Kang K.H."/>
            <person name="Hance I.R."/>
            <person name="Nelson K.E."/>
            <person name="Fraser C.M."/>
        </authorList>
    </citation>
    <scope>NUCLEOTIDE SEQUENCE [LARGE SCALE GENOMIC DNA]</scope>
    <source>
        <strain>COL</strain>
    </source>
</reference>
<evidence type="ECO:0000250" key="1"/>
<evidence type="ECO:0000305" key="2"/>
<name>FEMB_STAAC</name>
<comment type="function">
    <text evidence="1">Catalyzes the formation of the pentaglycine interpeptide bridge, which is characteristic of the S.aureus peptidoglycan. Adds glycines 4 and 5 of the pentaglycine bridge, using glycyl-tRNA(Gly) as donor. Involved in resistance to methicillin (By similarity).</text>
</comment>
<comment type="catalytic activity">
    <reaction>
        <text>MurNAc-L-Ala-D-isoglutaminyl-L-Lys-(N(6)-tri-Gly)-D-Ala-D-Ala-diphospho-di-trans,octa-cis-undecaprenyl-GlcNAc + 2 glycyl-tRNA(Gly) = MurNAc-L-Ala-D-isoglutaminyl-L-Lys-(N(6)-penta-Gly)-D-Ala-D-Ala-diphospho-di-trans,octa-cis-undecaprenyl-GlcNAc + 2 tRNA(Gly) + 2 H(+)</text>
        <dbReference type="Rhea" id="RHEA:30443"/>
        <dbReference type="Rhea" id="RHEA-COMP:9664"/>
        <dbReference type="Rhea" id="RHEA-COMP:9683"/>
        <dbReference type="ChEBI" id="CHEBI:15378"/>
        <dbReference type="ChEBI" id="CHEBI:62235"/>
        <dbReference type="ChEBI" id="CHEBI:62236"/>
        <dbReference type="ChEBI" id="CHEBI:78442"/>
        <dbReference type="ChEBI" id="CHEBI:78522"/>
        <dbReference type="EC" id="2.3.2.18"/>
    </reaction>
</comment>
<comment type="subunit">
    <text evidence="1">Homodimer. Interacts with FemA (By similarity).</text>
</comment>
<comment type="subcellular location">
    <subcellularLocation>
        <location evidence="1">Cytoplasm</location>
    </subcellularLocation>
</comment>
<comment type="similarity">
    <text evidence="2">Belongs to the FemABX family.</text>
</comment>
<sequence length="419" mass="49676">MKFTELTVTEFDNFVQNPSLESHYFQVKENIVTRENDGFEVVLLGIKDDNNKVIAASLFSKIPTMGSYVYYSNRGPVMDFSDLGLVDYYLKELDKYLQQHQCLYVKLDPYWLYHLYDKDIVPFEGREKNDALVNLFKSHGYEHHGFTTEYDTSSQVRWMGVLNLEGKTPETLKKTFDSQRKRNINKAINYGVKVRFLERDEFNLFLDLYRETEERAGFVSKTDDYFYNFIDTYGDKVLVPLAYIDLDEYVLKLQQELNDKENRRDQMMAKENKSDKQMKKIAELDKQIDHDQHELLNASELSKTDGPILNLASGVYFANAYEVNYFSGGSSEKYNQFMGPYMMHWFMINYCFDNGYDRYNFYGLSGDFTENSEDYGVYRFKRGFNVQIEELIGDFYKPIHKVKYWLFTTLDKLRKKLKK</sequence>
<protein>
    <recommendedName>
        <fullName>Aminoacyltransferase FemB</fullName>
        <ecNumber>2.3.2.18</ecNumber>
    </recommendedName>
    <alternativeName>
        <fullName>Factor essential for expression of methicillin resistance B</fullName>
    </alternativeName>
    <alternativeName>
        <fullName>N-acetylmuramoyl-L-alanyl-D-glutamyl-L-lysyl-(N6-triglycine)-D-alanyl-D-alanine-diphosphoundecaprenyl-N-acetylglucosamine:glycine glycyltransferase</fullName>
    </alternativeName>
</protein>
<feature type="chain" id="PRO_0000204738" description="Aminoacyltransferase FemB">
    <location>
        <begin position="1"/>
        <end position="419"/>
    </location>
</feature>